<keyword id="KW-0067">ATP-binding</keyword>
<keyword id="KW-0436">Ligase</keyword>
<keyword id="KW-0547">Nucleotide-binding</keyword>
<keyword id="KW-0658">Purine biosynthesis</keyword>
<dbReference type="EC" id="6.3.2.6" evidence="1"/>
<dbReference type="EMBL" id="AM260525">
    <property type="protein sequence ID" value="CAK01712.1"/>
    <property type="molecule type" value="Genomic_DNA"/>
</dbReference>
<dbReference type="RefSeq" id="WP_012231893.1">
    <property type="nucleotide sequence ID" value="NC_010161.1"/>
</dbReference>
<dbReference type="SMR" id="A9IVH1"/>
<dbReference type="KEGG" id="btr:BT_1350"/>
<dbReference type="eggNOG" id="COG0152">
    <property type="taxonomic scope" value="Bacteria"/>
</dbReference>
<dbReference type="HOGENOM" id="CLU_061495_2_0_5"/>
<dbReference type="UniPathway" id="UPA00074">
    <property type="reaction ID" value="UER00131"/>
</dbReference>
<dbReference type="Proteomes" id="UP000001592">
    <property type="component" value="Chromosome"/>
</dbReference>
<dbReference type="GO" id="GO:0005829">
    <property type="term" value="C:cytosol"/>
    <property type="evidence" value="ECO:0007669"/>
    <property type="project" value="TreeGrafter"/>
</dbReference>
<dbReference type="GO" id="GO:0005524">
    <property type="term" value="F:ATP binding"/>
    <property type="evidence" value="ECO:0007669"/>
    <property type="project" value="UniProtKB-KW"/>
</dbReference>
<dbReference type="GO" id="GO:0004639">
    <property type="term" value="F:phosphoribosylaminoimidazolesuccinocarboxamide synthase activity"/>
    <property type="evidence" value="ECO:0007669"/>
    <property type="project" value="UniProtKB-UniRule"/>
</dbReference>
<dbReference type="GO" id="GO:0006189">
    <property type="term" value="P:'de novo' IMP biosynthetic process"/>
    <property type="evidence" value="ECO:0007669"/>
    <property type="project" value="UniProtKB-UniRule"/>
</dbReference>
<dbReference type="GO" id="GO:0009236">
    <property type="term" value="P:cobalamin biosynthetic process"/>
    <property type="evidence" value="ECO:0007669"/>
    <property type="project" value="InterPro"/>
</dbReference>
<dbReference type="CDD" id="cd01415">
    <property type="entry name" value="SAICAR_synt_PurC"/>
    <property type="match status" value="1"/>
</dbReference>
<dbReference type="FunFam" id="3.30.470.20:FF:000006">
    <property type="entry name" value="Phosphoribosylaminoimidazole-succinocarboxamide synthase"/>
    <property type="match status" value="1"/>
</dbReference>
<dbReference type="Gene3D" id="3.30.470.20">
    <property type="entry name" value="ATP-grasp fold, B domain"/>
    <property type="match status" value="1"/>
</dbReference>
<dbReference type="Gene3D" id="3.30.200.20">
    <property type="entry name" value="Phosphorylase Kinase, domain 1"/>
    <property type="match status" value="1"/>
</dbReference>
<dbReference type="HAMAP" id="MF_00137">
    <property type="entry name" value="SAICAR_synth"/>
    <property type="match status" value="1"/>
</dbReference>
<dbReference type="InterPro" id="IPR028923">
    <property type="entry name" value="SAICAR_synt/ADE2_N"/>
</dbReference>
<dbReference type="InterPro" id="IPR033934">
    <property type="entry name" value="SAICAR_synt_PurC"/>
</dbReference>
<dbReference type="InterPro" id="IPR001636">
    <property type="entry name" value="SAICAR_synth"/>
</dbReference>
<dbReference type="InterPro" id="IPR050089">
    <property type="entry name" value="SAICAR_synthetase"/>
</dbReference>
<dbReference type="InterPro" id="IPR018236">
    <property type="entry name" value="SAICAR_synthetase_CS"/>
</dbReference>
<dbReference type="NCBIfam" id="TIGR00081">
    <property type="entry name" value="purC"/>
    <property type="match status" value="1"/>
</dbReference>
<dbReference type="PANTHER" id="PTHR43599">
    <property type="entry name" value="MULTIFUNCTIONAL PROTEIN ADE2"/>
    <property type="match status" value="1"/>
</dbReference>
<dbReference type="PANTHER" id="PTHR43599:SF3">
    <property type="entry name" value="SI:DKEY-6E2.2"/>
    <property type="match status" value="1"/>
</dbReference>
<dbReference type="Pfam" id="PF01259">
    <property type="entry name" value="SAICAR_synt"/>
    <property type="match status" value="1"/>
</dbReference>
<dbReference type="SUPFAM" id="SSF56104">
    <property type="entry name" value="SAICAR synthase-like"/>
    <property type="match status" value="1"/>
</dbReference>
<dbReference type="PROSITE" id="PS01057">
    <property type="entry name" value="SAICAR_SYNTHETASE_1"/>
    <property type="match status" value="1"/>
</dbReference>
<protein>
    <recommendedName>
        <fullName evidence="1">Phosphoribosylaminoimidazole-succinocarboxamide synthase</fullName>
        <ecNumber evidence="1">6.3.2.6</ecNumber>
    </recommendedName>
    <alternativeName>
        <fullName evidence="1">SAICAR synthetase</fullName>
    </alternativeName>
</protein>
<gene>
    <name evidence="1" type="primary">purC</name>
    <name type="ordered locus">BT_1350</name>
</gene>
<proteinExistence type="inferred from homology"/>
<name>PUR7_BART1</name>
<accession>A9IVH1</accession>
<evidence type="ECO:0000255" key="1">
    <source>
        <dbReference type="HAMAP-Rule" id="MF_00137"/>
    </source>
</evidence>
<feature type="chain" id="PRO_1000076445" description="Phosphoribosylaminoimidazole-succinocarboxamide synthase">
    <location>
        <begin position="1"/>
        <end position="254"/>
    </location>
</feature>
<comment type="catalytic activity">
    <reaction evidence="1">
        <text>5-amino-1-(5-phospho-D-ribosyl)imidazole-4-carboxylate + L-aspartate + ATP = (2S)-2-[5-amino-1-(5-phospho-beta-D-ribosyl)imidazole-4-carboxamido]succinate + ADP + phosphate + 2 H(+)</text>
        <dbReference type="Rhea" id="RHEA:22628"/>
        <dbReference type="ChEBI" id="CHEBI:15378"/>
        <dbReference type="ChEBI" id="CHEBI:29991"/>
        <dbReference type="ChEBI" id="CHEBI:30616"/>
        <dbReference type="ChEBI" id="CHEBI:43474"/>
        <dbReference type="ChEBI" id="CHEBI:58443"/>
        <dbReference type="ChEBI" id="CHEBI:77657"/>
        <dbReference type="ChEBI" id="CHEBI:456216"/>
        <dbReference type="EC" id="6.3.2.6"/>
    </reaction>
</comment>
<comment type="pathway">
    <text evidence="1">Purine metabolism; IMP biosynthesis via de novo pathway; 5-amino-1-(5-phospho-D-ribosyl)imidazole-4-carboxamide from 5-amino-1-(5-phospho-D-ribosyl)imidazole-4-carboxylate: step 1/2.</text>
</comment>
<comment type="similarity">
    <text evidence="1">Belongs to the SAICAR synthetase family.</text>
</comment>
<reference key="1">
    <citation type="journal article" date="2007" name="Nat. Genet.">
        <title>Genomic analysis of Bartonella identifies type IV secretion systems as host adaptability factors.</title>
        <authorList>
            <person name="Saenz H.L."/>
            <person name="Engel P."/>
            <person name="Stoeckli M.C."/>
            <person name="Lanz C."/>
            <person name="Raddatz G."/>
            <person name="Vayssier-Taussat M."/>
            <person name="Birtles R."/>
            <person name="Schuster S.C."/>
            <person name="Dehio C."/>
        </authorList>
    </citation>
    <scope>NUCLEOTIDE SEQUENCE [LARGE SCALE GENOMIC DNA]</scope>
    <source>
        <strain>CIP 105476 / IBS 506</strain>
    </source>
</reference>
<sequence>MNRRHRIYEGKAKILYEGPEPGTYIQFFKDDATAFNAKKHEIIDGKGVLNNRISEHIFSHLGRLGIPTHFIKRINMREQLIKAVEIIPLEVVVRNVAAGSLAKRLGLEEGAPLPQSIIEFYYKNDSLDDPMVTEEHITAFGWAVPQEIEDIMQLSIRINDFLSGLFAGVNIQLIDFKMEFGRLWEDETMRIVLADEISPDSARLWDMQTREKMDKDRFRRDMGGLINAYQEVAKRLGIMNENEPIRPSGPVLVK</sequence>
<organism>
    <name type="scientific">Bartonella tribocorum (strain CIP 105476 / IBS 506)</name>
    <dbReference type="NCBI Taxonomy" id="382640"/>
    <lineage>
        <taxon>Bacteria</taxon>
        <taxon>Pseudomonadati</taxon>
        <taxon>Pseudomonadota</taxon>
        <taxon>Alphaproteobacteria</taxon>
        <taxon>Hyphomicrobiales</taxon>
        <taxon>Bartonellaceae</taxon>
        <taxon>Bartonella</taxon>
    </lineage>
</organism>